<proteinExistence type="evidence at protein level"/>
<dbReference type="EC" id="2.3.2.27" evidence="9"/>
<dbReference type="EMBL" id="HM560981">
    <property type="protein sequence ID" value="ADK56111.1"/>
    <property type="molecule type" value="mRNA"/>
</dbReference>
<dbReference type="EMBL" id="AF127084">
    <property type="protein sequence ID" value="AAF22131.1"/>
    <property type="molecule type" value="mRNA"/>
</dbReference>
<dbReference type="EMBL" id="AF127085">
    <property type="protein sequence ID" value="AAF22132.1"/>
    <property type="molecule type" value="mRNA"/>
</dbReference>
<dbReference type="EMBL" id="AK173098">
    <property type="protein sequence ID" value="BAD32376.1"/>
    <property type="molecule type" value="mRNA"/>
</dbReference>
<dbReference type="EMBL" id="BC010329">
    <property type="protein sequence ID" value="AAH10329.1"/>
    <property type="status" value="ALT_SEQ"/>
    <property type="molecule type" value="mRNA"/>
</dbReference>
<dbReference type="CCDS" id="CCDS20392.1">
    <molecule id="Q69ZS0-1"/>
</dbReference>
<dbReference type="RefSeq" id="NP_061372.2">
    <molecule id="Q69ZS0-1"/>
    <property type="nucleotide sequence ID" value="NM_018884.2"/>
</dbReference>
<dbReference type="BMRB" id="Q69ZS0"/>
<dbReference type="SMR" id="Q69ZS0"/>
<dbReference type="BioGRID" id="207755">
    <property type="interactions" value="6"/>
</dbReference>
<dbReference type="FunCoup" id="Q69ZS0">
    <property type="interactions" value="184"/>
</dbReference>
<dbReference type="IntAct" id="Q69ZS0">
    <property type="interactions" value="1"/>
</dbReference>
<dbReference type="STRING" id="10090.ENSMUSP00000075376"/>
<dbReference type="iPTMnet" id="Q69ZS0"/>
<dbReference type="PhosphoSitePlus" id="Q69ZS0"/>
<dbReference type="jPOST" id="Q69ZS0"/>
<dbReference type="PaxDb" id="10090-ENSMUSP00000075376"/>
<dbReference type="PeptideAtlas" id="Q69ZS0"/>
<dbReference type="ProteomicsDB" id="300217">
    <molecule id="Q69ZS0-1"/>
</dbReference>
<dbReference type="ProteomicsDB" id="300218">
    <molecule id="Q69ZS0-2"/>
</dbReference>
<dbReference type="ProteomicsDB" id="300219">
    <molecule id="Q69ZS0-3"/>
</dbReference>
<dbReference type="Pumba" id="Q69ZS0"/>
<dbReference type="Antibodypedia" id="31945">
    <property type="antibodies" value="100 antibodies from 15 providers"/>
</dbReference>
<dbReference type="DNASU" id="55983"/>
<dbReference type="Ensembl" id="ENSMUST00000075994.11">
    <molecule id="Q69ZS0-1"/>
    <property type="protein sequence ID" value="ENSMUSP00000075376.7"/>
    <property type="gene ID" value="ENSMUSG00000035357.18"/>
</dbReference>
<dbReference type="GeneID" id="55983"/>
<dbReference type="KEGG" id="mmu:55983"/>
<dbReference type="UCSC" id="uc009dcd.2">
    <molecule id="Q69ZS0-1"/>
    <property type="organism name" value="mouse"/>
</dbReference>
<dbReference type="UCSC" id="uc012eps.1">
    <molecule id="Q69ZS0-3"/>
    <property type="organism name" value="mouse"/>
</dbReference>
<dbReference type="AGR" id="MGI:1933157"/>
<dbReference type="CTD" id="23024"/>
<dbReference type="MGI" id="MGI:1933157">
    <property type="gene designation" value="Pdzrn3"/>
</dbReference>
<dbReference type="VEuPathDB" id="HostDB:ENSMUSG00000035357"/>
<dbReference type="eggNOG" id="KOG0297">
    <property type="taxonomic scope" value="Eukaryota"/>
</dbReference>
<dbReference type="eggNOG" id="KOG0312">
    <property type="taxonomic scope" value="Eukaryota"/>
</dbReference>
<dbReference type="GeneTree" id="ENSGT00950000183062"/>
<dbReference type="HOGENOM" id="CLU_011096_0_0_1"/>
<dbReference type="InParanoid" id="Q69ZS0"/>
<dbReference type="OMA" id="HAGCGQL"/>
<dbReference type="OrthoDB" id="6270329at2759"/>
<dbReference type="PhylomeDB" id="Q69ZS0"/>
<dbReference type="TreeFam" id="TF315909"/>
<dbReference type="UniPathway" id="UPA00143"/>
<dbReference type="BioGRID-ORCS" id="55983">
    <property type="hits" value="2 hits in 78 CRISPR screens"/>
</dbReference>
<dbReference type="ChiTaRS" id="Pdzrn3">
    <property type="organism name" value="mouse"/>
</dbReference>
<dbReference type="PRO" id="PR:Q69ZS0"/>
<dbReference type="Proteomes" id="UP000000589">
    <property type="component" value="Chromosome 6"/>
</dbReference>
<dbReference type="RNAct" id="Q69ZS0">
    <property type="molecule type" value="protein"/>
</dbReference>
<dbReference type="Bgee" id="ENSMUSG00000035357">
    <property type="expression patterns" value="Expressed in humerus cartilage element and 241 other cell types or tissues"/>
</dbReference>
<dbReference type="ExpressionAtlas" id="Q69ZS0">
    <property type="expression patterns" value="baseline and differential"/>
</dbReference>
<dbReference type="GO" id="GO:0005737">
    <property type="term" value="C:cytoplasm"/>
    <property type="evidence" value="ECO:0007669"/>
    <property type="project" value="UniProtKB-SubCell"/>
</dbReference>
<dbReference type="GO" id="GO:0031594">
    <property type="term" value="C:neuromuscular junction"/>
    <property type="evidence" value="ECO:0000314"/>
    <property type="project" value="UniProtKB"/>
</dbReference>
<dbReference type="GO" id="GO:0061630">
    <property type="term" value="F:ubiquitin protein ligase activity"/>
    <property type="evidence" value="ECO:0000314"/>
    <property type="project" value="MGI"/>
</dbReference>
<dbReference type="GO" id="GO:0004842">
    <property type="term" value="F:ubiquitin-protein transferase activity"/>
    <property type="evidence" value="ECO:0000314"/>
    <property type="project" value="UniProtKB"/>
</dbReference>
<dbReference type="GO" id="GO:0008270">
    <property type="term" value="F:zinc ion binding"/>
    <property type="evidence" value="ECO:0007669"/>
    <property type="project" value="UniProtKB-KW"/>
</dbReference>
<dbReference type="GO" id="GO:0007528">
    <property type="term" value="P:neuromuscular junction development"/>
    <property type="evidence" value="ECO:0000315"/>
    <property type="project" value="UniProtKB"/>
</dbReference>
<dbReference type="GO" id="GO:0016567">
    <property type="term" value="P:protein ubiquitination"/>
    <property type="evidence" value="ECO:0000314"/>
    <property type="project" value="UniProtKB"/>
</dbReference>
<dbReference type="CDD" id="cd06715">
    <property type="entry name" value="PDZ1-PDZRN4-like"/>
    <property type="match status" value="1"/>
</dbReference>
<dbReference type="CDD" id="cd06716">
    <property type="entry name" value="PDZ2-PDZRN4-like"/>
    <property type="match status" value="1"/>
</dbReference>
<dbReference type="CDD" id="cd16718">
    <property type="entry name" value="RING-HC_LNX3"/>
    <property type="match status" value="1"/>
</dbReference>
<dbReference type="FunFam" id="3.30.40.10:FF:000214">
    <property type="entry name" value="E3 ubiquitin-protein ligase PDZRN3 isoform X1"/>
    <property type="match status" value="1"/>
</dbReference>
<dbReference type="FunFam" id="3.30.40.10:FF:000445">
    <property type="entry name" value="E3 ubiquitin-protein ligase PDZRN3 isoform X1"/>
    <property type="match status" value="1"/>
</dbReference>
<dbReference type="FunFam" id="2.30.42.10:FF:000028">
    <property type="entry name" value="PDZ domain containing ring finger 4"/>
    <property type="match status" value="1"/>
</dbReference>
<dbReference type="FunFam" id="2.30.42.10:FF:000133">
    <property type="entry name" value="PDZ domain containing ring finger 4"/>
    <property type="match status" value="1"/>
</dbReference>
<dbReference type="Gene3D" id="2.30.42.10">
    <property type="match status" value="2"/>
</dbReference>
<dbReference type="Gene3D" id="3.30.40.10">
    <property type="entry name" value="Zinc/RING finger domain, C3HC4 (zinc finger)"/>
    <property type="match status" value="2"/>
</dbReference>
<dbReference type="InterPro" id="IPR051971">
    <property type="entry name" value="E3_ubiquitin-PDZ_ligase"/>
</dbReference>
<dbReference type="InterPro" id="IPR001478">
    <property type="entry name" value="PDZ"/>
</dbReference>
<dbReference type="InterPro" id="IPR036034">
    <property type="entry name" value="PDZ_sf"/>
</dbReference>
<dbReference type="InterPro" id="IPR001841">
    <property type="entry name" value="Znf_RING"/>
</dbReference>
<dbReference type="InterPro" id="IPR013083">
    <property type="entry name" value="Znf_RING/FYVE/PHD"/>
</dbReference>
<dbReference type="InterPro" id="IPR017907">
    <property type="entry name" value="Znf_RING_CS"/>
</dbReference>
<dbReference type="InterPro" id="IPR001293">
    <property type="entry name" value="Znf_TRAF"/>
</dbReference>
<dbReference type="PANTHER" id="PTHR15545:SF5">
    <property type="entry name" value="E3 UBIQUITIN-PROTEIN LIGASE PDZRN3"/>
    <property type="match status" value="1"/>
</dbReference>
<dbReference type="PANTHER" id="PTHR15545">
    <property type="entry name" value="PDZ DOMAIN CONTAINING RING FINGER PROTEIN 3, 4"/>
    <property type="match status" value="1"/>
</dbReference>
<dbReference type="Pfam" id="PF00595">
    <property type="entry name" value="PDZ"/>
    <property type="match status" value="2"/>
</dbReference>
<dbReference type="Pfam" id="PF13923">
    <property type="entry name" value="zf-C3HC4_2"/>
    <property type="match status" value="1"/>
</dbReference>
<dbReference type="SMART" id="SM00228">
    <property type="entry name" value="PDZ"/>
    <property type="match status" value="2"/>
</dbReference>
<dbReference type="SMART" id="SM00184">
    <property type="entry name" value="RING"/>
    <property type="match status" value="1"/>
</dbReference>
<dbReference type="SUPFAM" id="SSF50156">
    <property type="entry name" value="PDZ domain-like"/>
    <property type="match status" value="2"/>
</dbReference>
<dbReference type="SUPFAM" id="SSF57850">
    <property type="entry name" value="RING/U-box"/>
    <property type="match status" value="1"/>
</dbReference>
<dbReference type="SUPFAM" id="SSF49599">
    <property type="entry name" value="TRAF domain-like"/>
    <property type="match status" value="1"/>
</dbReference>
<dbReference type="PROSITE" id="PS50106">
    <property type="entry name" value="PDZ"/>
    <property type="match status" value="2"/>
</dbReference>
<dbReference type="PROSITE" id="PS00518">
    <property type="entry name" value="ZF_RING_1"/>
    <property type="match status" value="1"/>
</dbReference>
<dbReference type="PROSITE" id="PS50089">
    <property type="entry name" value="ZF_RING_2"/>
    <property type="match status" value="1"/>
</dbReference>
<dbReference type="PROSITE" id="PS50145">
    <property type="entry name" value="ZF_TRAF"/>
    <property type="match status" value="1"/>
</dbReference>
<gene>
    <name type="primary">Pdzrn3</name>
    <name type="synonym">Kiaa1095</name>
    <name type="synonym">Semcap3</name>
</gene>
<accession>Q69ZS0</accession>
<accession>Q91Z03</accession>
<accession>Q9QY54</accession>
<accession>Q9QY55</accession>
<feature type="chain" id="PRO_0000055918" description="E3 ubiquitin-protein ligase PDZRN3">
    <location>
        <begin position="1"/>
        <end position="1063"/>
    </location>
</feature>
<feature type="domain" description="PDZ 1" evidence="4">
    <location>
        <begin position="249"/>
        <end position="339"/>
    </location>
</feature>
<feature type="domain" description="PDZ 2" evidence="4">
    <location>
        <begin position="419"/>
        <end position="503"/>
    </location>
</feature>
<feature type="zinc finger region" description="RING-type; degenerate" evidence="5">
    <location>
        <begin position="18"/>
        <end position="56"/>
    </location>
</feature>
<feature type="zinc finger region" description="TRAF-type" evidence="6">
    <location>
        <begin position="100"/>
        <end position="158"/>
    </location>
</feature>
<feature type="region of interest" description="Disordered" evidence="7">
    <location>
        <begin position="545"/>
        <end position="602"/>
    </location>
</feature>
<feature type="region of interest" description="Disordered" evidence="7">
    <location>
        <begin position="746"/>
        <end position="798"/>
    </location>
</feature>
<feature type="region of interest" description="Disordered" evidence="7">
    <location>
        <begin position="834"/>
        <end position="853"/>
    </location>
</feature>
<feature type="coiled-coil region" evidence="3">
    <location>
        <begin position="680"/>
        <end position="705"/>
    </location>
</feature>
<feature type="compositionally biased region" description="Polar residues" evidence="7">
    <location>
        <begin position="554"/>
        <end position="563"/>
    </location>
</feature>
<feature type="compositionally biased region" description="Basic and acidic residues" evidence="7">
    <location>
        <begin position="564"/>
        <end position="582"/>
    </location>
</feature>
<feature type="compositionally biased region" description="Basic and acidic residues" evidence="7">
    <location>
        <begin position="746"/>
        <end position="755"/>
    </location>
</feature>
<feature type="compositionally biased region" description="Polar residues" evidence="7">
    <location>
        <begin position="756"/>
        <end position="770"/>
    </location>
</feature>
<feature type="modified residue" description="Phosphoserine" evidence="13">
    <location>
        <position position="427"/>
    </location>
</feature>
<feature type="splice variant" id="VSP_012610" description="In isoform 2." evidence="11">
    <location>
        <begin position="82"/>
        <end position="133"/>
    </location>
</feature>
<feature type="splice variant" id="VSP_039769" description="In isoform 3." evidence="10">
    <location>
        <begin position="419"/>
        <end position="451"/>
    </location>
</feature>
<feature type="mutagenesis site" description="Loss of E3 ligase activity." evidence="9">
    <original>C</original>
    <variation>A</variation>
    <location>
        <position position="18"/>
    </location>
</feature>
<feature type="mutagenesis site" description="Loss of E3 ligase activity." evidence="9">
    <original>C</original>
    <variation>A</variation>
    <location>
        <position position="38"/>
    </location>
</feature>
<feature type="sequence conflict" description="In Ref. 3; BAD32376." evidence="12" ref="3">
    <original>C</original>
    <variation>R</variation>
    <location>
        <position position="82"/>
    </location>
</feature>
<feature type="sequence conflict" description="In Ref. 2; AAF22131/AAF22132." evidence="12" ref="2">
    <original>V</original>
    <variation>L</variation>
    <location>
        <position position="199"/>
    </location>
</feature>
<feature type="sequence conflict" description="In Ref. 2; AAF22131/AAF22132." evidence="12" ref="2">
    <original>S</original>
    <variation>Y</variation>
    <location>
        <position position="596"/>
    </location>
</feature>
<feature type="sequence conflict" description="In Ref. 2; AAF22131/AAF22132." evidence="12" ref="2">
    <original>N</original>
    <variation>Y</variation>
    <location>
        <position position="731"/>
    </location>
</feature>
<feature type="sequence conflict" description="In Ref. 4; AAH10329." evidence="12" ref="4">
    <original>A</original>
    <variation>S</variation>
    <location>
        <position position="823"/>
    </location>
</feature>
<feature type="sequence conflict" description="In Ref. 4; AAH10329." evidence="12" ref="4">
    <original>V</original>
    <variation>A</variation>
    <location>
        <position position="912"/>
    </location>
</feature>
<feature type="sequence conflict" description="In Ref. 2; AAF22131/AAF22132." evidence="12" ref="2">
    <original>R</original>
    <variation>K</variation>
    <location>
        <position position="938"/>
    </location>
</feature>
<evidence type="ECO:0000250" key="1"/>
<evidence type="ECO:0000250" key="2">
    <source>
        <dbReference type="UniProtKB" id="E7FDW2"/>
    </source>
</evidence>
<evidence type="ECO:0000255" key="3"/>
<evidence type="ECO:0000255" key="4">
    <source>
        <dbReference type="PROSITE-ProRule" id="PRU00143"/>
    </source>
</evidence>
<evidence type="ECO:0000255" key="5">
    <source>
        <dbReference type="PROSITE-ProRule" id="PRU00175"/>
    </source>
</evidence>
<evidence type="ECO:0000255" key="6">
    <source>
        <dbReference type="PROSITE-ProRule" id="PRU00207"/>
    </source>
</evidence>
<evidence type="ECO:0000256" key="7">
    <source>
        <dbReference type="SAM" id="MobiDB-lite"/>
    </source>
</evidence>
<evidence type="ECO:0000269" key="8">
    <source>
    </source>
</evidence>
<evidence type="ECO:0000269" key="9">
    <source>
    </source>
</evidence>
<evidence type="ECO:0000303" key="10">
    <source>
    </source>
</evidence>
<evidence type="ECO:0000303" key="11">
    <source ref="2"/>
</evidence>
<evidence type="ECO:0000305" key="12"/>
<evidence type="ECO:0007744" key="13">
    <source>
    </source>
</evidence>
<organism>
    <name type="scientific">Mus musculus</name>
    <name type="common">Mouse</name>
    <dbReference type="NCBI Taxonomy" id="10090"/>
    <lineage>
        <taxon>Eukaryota</taxon>
        <taxon>Metazoa</taxon>
        <taxon>Chordata</taxon>
        <taxon>Craniata</taxon>
        <taxon>Vertebrata</taxon>
        <taxon>Euteleostomi</taxon>
        <taxon>Mammalia</taxon>
        <taxon>Eutheria</taxon>
        <taxon>Euarchontoglires</taxon>
        <taxon>Glires</taxon>
        <taxon>Rodentia</taxon>
        <taxon>Myomorpha</taxon>
        <taxon>Muroidea</taxon>
        <taxon>Muridae</taxon>
        <taxon>Murinae</taxon>
        <taxon>Mus</taxon>
        <taxon>Mus</taxon>
    </lineage>
</organism>
<protein>
    <recommendedName>
        <fullName>E3 ubiquitin-protein ligase PDZRN3</fullName>
        <ecNumber evidence="9">2.3.2.27</ecNumber>
    </recommendedName>
    <alternativeName>
        <fullName>PDZ domain-containing RING finger protein 3</fullName>
    </alternativeName>
    <alternativeName>
        <fullName evidence="12">RING-type E3 ubiquitin transferase PDZRN3</fullName>
    </alternativeName>
    <alternativeName>
        <fullName>Semaphorin cytoplasmic domain-associated protein 3</fullName>
        <shortName>Protein SEMACAP3</shortName>
    </alternativeName>
</protein>
<keyword id="KW-0025">Alternative splicing</keyword>
<keyword id="KW-0175">Coiled coil</keyword>
<keyword id="KW-0963">Cytoplasm</keyword>
<keyword id="KW-0479">Metal-binding</keyword>
<keyword id="KW-0597">Phosphoprotein</keyword>
<keyword id="KW-1185">Reference proteome</keyword>
<keyword id="KW-0677">Repeat</keyword>
<keyword id="KW-0770">Synapse</keyword>
<keyword id="KW-0808">Transferase</keyword>
<keyword id="KW-0832">Ubl conjugation</keyword>
<keyword id="KW-0833">Ubl conjugation pathway</keyword>
<keyword id="KW-0862">Zinc</keyword>
<keyword id="KW-0863">Zinc-finger</keyword>
<name>PZRN3_MOUSE</name>
<sequence length="1063" mass="119401">MGFELDRFDGDVDPDLKCALCHKVLEDPLTTPCGHVFCAGCVLPWVVQEGSCPARCRGRLSAKELNHVLPLKRLILKLDIKCAHAARGCGRVVKLQDLPEHLERCDFAPARCRHAGCGQLLLRRDVEAHMRDACDARPVGRCQEGCGLPLTHGEQRAGGHCCARALRAHNGALQARLGALHKALKKEALRAGKREKSLVAQLAAAQLELQMTALRYQKKFTEYSARLDSLSRCVAAPPGGKGEETKSLTLVLHRDSGSLGFNIIGGRPCVDNQDGSSSEGIFVSKIVDSGPAAKEGGLQIHDRIIEVNGKDLSRATHDQAVEAFKTAKEPIVVQVLRRTPRTKMFTPASESQLVDTGTQTDITFEHIMALTKMSSPSPPVLDPYLLPEEHPASHDYYDPNDYMGDIHQDMDREELELEEVGLYRMNSQDKLGLTVCYRTDDEDDIGIYISEIDPNSIAAKDGRIREGDRIIQINGIEVQNREEAVALLTSEENKNFSLLIARPELQLDEGWMDDDRNDFLDDLHMDMLEEQHHQAMQFTASVLQQKKHEEDGGTTDTATILSNQHEKDSGVGRTDESTRNDESSEQENNGEDATASANPLAGQRKLTCSQDTLGSGDLPFSNESFISADCTDVDYLGIPEDECERFRELLELKCQVQSASPYSLYYPSSPLDAAGKSDPESVDKELELLNEELRSIELECLSIVRAHKMQQLKEQYRESWMLHHSGFRNYNTSVDVRRHELSDITELPEKSDKDSSSAYNTGESCRSTPLTLEISPDNSLRRVAEGSSEGATANIEAYRPSPKNLLAITEDPEVSTPSYNPSAKELDPSQALEIKERRGSDGSRSPTASPKLGNAYLPSYHHSPYKHAHIPAHAQHYQSYMHLIQQKSAVEYAQSQMSLVSMCKDLNSSNSVEPRMEWKVKIRSDGTRYITKRPVRDRLLRERALKIREERSGLTTDDDAMSEMKMGRYWSKEERKQHLVKAKEQRRRREFMMQSRLDCLKEQQASDDRKEMNILELSHKKMMKKRNKKIFDNWMTIQELLTHGTKSPDGTRVYNSFLSVTTV</sequence>
<comment type="function">
    <text evidence="8 9">E3 ubiquitin-protein ligase. Plays an important role in regulating the surface level of MUSK on myotubes. Mediates the ubiquitination of MUSK, promoting its endocytosis and lysosomal degradation. Might contribute to terminal myogenic differentiation.</text>
</comment>
<comment type="catalytic activity">
    <reaction evidence="9">
        <text>S-ubiquitinyl-[E2 ubiquitin-conjugating enzyme]-L-cysteine + [acceptor protein]-L-lysine = [E2 ubiquitin-conjugating enzyme]-L-cysteine + N(6)-ubiquitinyl-[acceptor protein]-L-lysine.</text>
        <dbReference type="EC" id="2.3.2.27"/>
    </reaction>
</comment>
<comment type="pathway">
    <text evidence="9">Protein modification; protein ubiquitination.</text>
</comment>
<comment type="subunit">
    <text evidence="1 9">Interacts with NLGN1 and EFNB2 (By similarity). Interacts with UBE2D2 and with MUSK via the first PDZ domain. In myotubes, the interaction between PDZRN3 and MUSK is enhanced upon agrin stimulation.</text>
</comment>
<comment type="subcellular location">
    <subcellularLocation>
        <location evidence="9">Synapse</location>
    </subcellularLocation>
    <subcellularLocation>
        <location evidence="2">Cytoplasm</location>
    </subcellularLocation>
    <text evidence="9">Localizes to the postsynaptic region of neuromuscular junctions.</text>
</comment>
<comment type="alternative products">
    <event type="alternative splicing"/>
    <isoform>
        <id>Q69ZS0-1</id>
        <name>1</name>
        <name>SEMCAP-3A</name>
        <name>PDZRN3B</name>
        <sequence type="displayed"/>
    </isoform>
    <isoform>
        <id>Q69ZS0-2</id>
        <name>2</name>
        <name>SEMCAP-3B</name>
        <sequence type="described" ref="VSP_012610"/>
    </isoform>
    <isoform>
        <id>Q69ZS0-3</id>
        <name>3</name>
        <name>PDZRN3A</name>
        <sequence type="described" ref="VSP_039769"/>
    </isoform>
</comment>
<comment type="tissue specificity">
    <text evidence="9">Highly expressed in skeletal and cardiac muscle and at lower levels in spinal cord and brain (at protein level). Also expressed in kidney and lung. In muscles, concentrated at the neuromuscular junction (NMJ).</text>
</comment>
<comment type="developmental stage">
    <text evidence="8 9">First detected at the NMJ at approximately 16.5 dpc, when NMJs have just formed. As the NMJ grows and matures, expression levels increase in concert with that of acetylcholine receptors. Levels stay relatively high until 14 days after birth, but decrease significantly by 21 days. Up-regulated during myogenic differentiation in C2C12 cells and during injury-induced muscle regeneration.</text>
</comment>
<comment type="domain">
    <text evidence="9">The RING-type zinc finger domain is required for E3 ligase activity.</text>
</comment>
<comment type="PTM">
    <text evidence="9">Auto-ubiquitinated.</text>
</comment>
<comment type="sequence caution" evidence="12">
    <conflict type="erroneous termination">
        <sequence resource="EMBL-CDS" id="AAH10329"/>
    </conflict>
    <text>Truncated C-terminus.</text>
</comment>
<reference key="1">
    <citation type="journal article" date="2007" name="J. Cell Biol.">
        <title>Regulation of synaptic growth and maturation by a synapse-associated E3 ubiquitin ligase at the neuromuscular junction.</title>
        <authorList>
            <person name="Lu Z."/>
            <person name="Je H.S."/>
            <person name="Young P."/>
            <person name="Gross J."/>
            <person name="Lu B."/>
            <person name="Feng G."/>
        </authorList>
    </citation>
    <scope>NUCLEOTIDE SEQUENCE [MRNA] (ISOFORM 3)</scope>
    <scope>FUNCTION</scope>
    <scope>CATALYTIC ACTIVITY</scope>
    <scope>PATHWAY</scope>
    <scope>INTERACTION WITH MUSK AND UBE2D2</scope>
    <scope>SUBCELLULAR LOCATION</scope>
    <scope>TISSUE SPECIFICITY</scope>
    <scope>DEVELOPMENTAL STAGE</scope>
    <scope>DOMAIN</scope>
    <scope>AUTOUBIQUITINATION</scope>
    <scope>MUTAGENESIS OF CYS-18 AND CYS-38</scope>
</reference>
<reference key="2">
    <citation type="submission" date="1999-02" db="EMBL/GenBank/DDBJ databases">
        <title>Cloning and characterization of a novel PDZ domain containing protein interacting with the transmembrane semaphorin, M-semF.</title>
        <authorList>
            <person name="Wang L.-H."/>
            <person name="Strittmatter S.M."/>
        </authorList>
    </citation>
    <scope>NUCLEOTIDE SEQUENCE [MRNA] (ISOFORMS 1 AND 2)</scope>
</reference>
<reference key="3">
    <citation type="journal article" date="2004" name="DNA Res.">
        <title>Prediction of the coding sequences of mouse homologues of KIAA gene: IV. The complete nucleotide sequences of 500 mouse KIAA-homologous cDNAs identified by screening of terminal sequences of cDNA clones randomly sampled from size-fractionated libraries.</title>
        <authorList>
            <person name="Okazaki N."/>
            <person name="Kikuno R."/>
            <person name="Ohara R."/>
            <person name="Inamoto S."/>
            <person name="Koseki H."/>
            <person name="Hiraoka S."/>
            <person name="Saga Y."/>
            <person name="Seino S."/>
            <person name="Nishimura M."/>
            <person name="Kaisho T."/>
            <person name="Hoshino K."/>
            <person name="Kitamura H."/>
            <person name="Nagase T."/>
            <person name="Ohara O."/>
            <person name="Koga H."/>
        </authorList>
    </citation>
    <scope>NUCLEOTIDE SEQUENCE [LARGE SCALE MRNA] OF 12-1063 (ISOFORM 1)</scope>
    <source>
        <tissue>Fetal brain</tissue>
    </source>
</reference>
<reference key="4">
    <citation type="journal article" date="2004" name="Genome Res.">
        <title>The status, quality, and expansion of the NIH full-length cDNA project: the Mammalian Gene Collection (MGC).</title>
        <authorList>
            <consortium name="The MGC Project Team"/>
        </authorList>
    </citation>
    <scope>NUCLEOTIDE SEQUENCE [LARGE SCALE MRNA] OF 392-1063</scope>
    <source>
        <strain>FVB/N</strain>
        <tissue>Mammary tumor</tissue>
    </source>
</reference>
<reference key="5">
    <citation type="journal article" date="2006" name="J. Cell Sci.">
        <title>PDZRN3 (LNX3, SEMCAP3) is required for the differentiation of C2C12 myoblasts into myotubes.</title>
        <authorList>
            <person name="Ko J.A."/>
            <person name="Kimura Y."/>
            <person name="Matsuura K."/>
            <person name="Yamamoto H."/>
            <person name="Gondo T."/>
            <person name="Inui M."/>
        </authorList>
    </citation>
    <scope>FUNCTION</scope>
    <scope>DEVELOPMENTAL STAGE</scope>
</reference>
<reference key="6">
    <citation type="journal article" date="2010" name="Cell">
        <title>A tissue-specific atlas of mouse protein phosphorylation and expression.</title>
        <authorList>
            <person name="Huttlin E.L."/>
            <person name="Jedrychowski M.P."/>
            <person name="Elias J.E."/>
            <person name="Goswami T."/>
            <person name="Rad R."/>
            <person name="Beausoleil S.A."/>
            <person name="Villen J."/>
            <person name="Haas W."/>
            <person name="Sowa M.E."/>
            <person name="Gygi S.P."/>
        </authorList>
    </citation>
    <scope>PHOSPHORYLATION [LARGE SCALE ANALYSIS] AT SER-427</scope>
    <scope>IDENTIFICATION BY MASS SPECTROMETRY [LARGE SCALE ANALYSIS]</scope>
    <source>
        <tissue>Brain</tissue>
    </source>
</reference>